<gene>
    <name evidence="1" type="primary">ihfB</name>
    <name evidence="1" type="synonym">himD</name>
    <name type="ordered locus">YPA_0684</name>
</gene>
<proteinExistence type="inferred from homology"/>
<dbReference type="EMBL" id="CP000308">
    <property type="protein sequence ID" value="ABG12652.1"/>
    <property type="molecule type" value="Genomic_DNA"/>
</dbReference>
<dbReference type="RefSeq" id="WP_002211322.1">
    <property type="nucleotide sequence ID" value="NZ_CP009906.1"/>
</dbReference>
<dbReference type="SMR" id="Q1CA70"/>
<dbReference type="GeneID" id="96664989"/>
<dbReference type="KEGG" id="ypa:YPA_0684"/>
<dbReference type="Proteomes" id="UP000001971">
    <property type="component" value="Chromosome"/>
</dbReference>
<dbReference type="GO" id="GO:0005694">
    <property type="term" value="C:chromosome"/>
    <property type="evidence" value="ECO:0007669"/>
    <property type="project" value="InterPro"/>
</dbReference>
<dbReference type="GO" id="GO:0005829">
    <property type="term" value="C:cytosol"/>
    <property type="evidence" value="ECO:0007669"/>
    <property type="project" value="TreeGrafter"/>
</dbReference>
<dbReference type="GO" id="GO:0003677">
    <property type="term" value="F:DNA binding"/>
    <property type="evidence" value="ECO:0007669"/>
    <property type="project" value="UniProtKB-UniRule"/>
</dbReference>
<dbReference type="GO" id="GO:0030527">
    <property type="term" value="F:structural constituent of chromatin"/>
    <property type="evidence" value="ECO:0007669"/>
    <property type="project" value="InterPro"/>
</dbReference>
<dbReference type="GO" id="GO:0006310">
    <property type="term" value="P:DNA recombination"/>
    <property type="evidence" value="ECO:0007669"/>
    <property type="project" value="UniProtKB-UniRule"/>
</dbReference>
<dbReference type="GO" id="GO:0006355">
    <property type="term" value="P:regulation of DNA-templated transcription"/>
    <property type="evidence" value="ECO:0007669"/>
    <property type="project" value="UniProtKB-UniRule"/>
</dbReference>
<dbReference type="GO" id="GO:0006417">
    <property type="term" value="P:regulation of translation"/>
    <property type="evidence" value="ECO:0007669"/>
    <property type="project" value="UniProtKB-UniRule"/>
</dbReference>
<dbReference type="CDD" id="cd13836">
    <property type="entry name" value="IHF_B"/>
    <property type="match status" value="1"/>
</dbReference>
<dbReference type="FunFam" id="4.10.520.10:FF:000003">
    <property type="entry name" value="Integration host factor subunit beta"/>
    <property type="match status" value="1"/>
</dbReference>
<dbReference type="Gene3D" id="4.10.520.10">
    <property type="entry name" value="IHF-like DNA-binding proteins"/>
    <property type="match status" value="1"/>
</dbReference>
<dbReference type="HAMAP" id="MF_00381">
    <property type="entry name" value="IHF_beta"/>
    <property type="match status" value="1"/>
</dbReference>
<dbReference type="InterPro" id="IPR000119">
    <property type="entry name" value="Hist_DNA-bd"/>
</dbReference>
<dbReference type="InterPro" id="IPR020816">
    <property type="entry name" value="Histone-like_DNA-bd_CS"/>
</dbReference>
<dbReference type="InterPro" id="IPR010992">
    <property type="entry name" value="IHF-like_DNA-bd_dom_sf"/>
</dbReference>
<dbReference type="InterPro" id="IPR005685">
    <property type="entry name" value="IHF_beta"/>
</dbReference>
<dbReference type="NCBIfam" id="TIGR00988">
    <property type="entry name" value="hip"/>
    <property type="match status" value="1"/>
</dbReference>
<dbReference type="NCBIfam" id="NF001222">
    <property type="entry name" value="PRK00199.1"/>
    <property type="match status" value="1"/>
</dbReference>
<dbReference type="PANTHER" id="PTHR33175">
    <property type="entry name" value="DNA-BINDING PROTEIN HU"/>
    <property type="match status" value="1"/>
</dbReference>
<dbReference type="PANTHER" id="PTHR33175:SF5">
    <property type="entry name" value="INTEGRATION HOST FACTOR SUBUNIT BETA"/>
    <property type="match status" value="1"/>
</dbReference>
<dbReference type="Pfam" id="PF00216">
    <property type="entry name" value="Bac_DNA_binding"/>
    <property type="match status" value="1"/>
</dbReference>
<dbReference type="PRINTS" id="PR01727">
    <property type="entry name" value="DNABINDINGHU"/>
</dbReference>
<dbReference type="SMART" id="SM00411">
    <property type="entry name" value="BHL"/>
    <property type="match status" value="1"/>
</dbReference>
<dbReference type="SUPFAM" id="SSF47729">
    <property type="entry name" value="IHF-like DNA-binding proteins"/>
    <property type="match status" value="1"/>
</dbReference>
<dbReference type="PROSITE" id="PS00045">
    <property type="entry name" value="HISTONE_LIKE"/>
    <property type="match status" value="1"/>
</dbReference>
<name>IHFB_YERPA</name>
<organism>
    <name type="scientific">Yersinia pestis bv. Antiqua (strain Antiqua)</name>
    <dbReference type="NCBI Taxonomy" id="360102"/>
    <lineage>
        <taxon>Bacteria</taxon>
        <taxon>Pseudomonadati</taxon>
        <taxon>Pseudomonadota</taxon>
        <taxon>Gammaproteobacteria</taxon>
        <taxon>Enterobacterales</taxon>
        <taxon>Yersiniaceae</taxon>
        <taxon>Yersinia</taxon>
    </lineage>
</organism>
<protein>
    <recommendedName>
        <fullName evidence="1">Integration host factor subunit beta</fullName>
        <shortName evidence="1">IHF-beta</shortName>
    </recommendedName>
</protein>
<sequence>MTKSELIERLAGQQSHVPAKVVEDAVKEMLEHMAGTLAEGERIEIRGFGSFSLHYRAPRVGRNPKTGDKVELEGKYVPHFKPGKELRDRANIYG</sequence>
<reference key="1">
    <citation type="journal article" date="2006" name="J. Bacteriol.">
        <title>Complete genome sequence of Yersinia pestis strains Antiqua and Nepal516: evidence of gene reduction in an emerging pathogen.</title>
        <authorList>
            <person name="Chain P.S.G."/>
            <person name="Hu P."/>
            <person name="Malfatti S.A."/>
            <person name="Radnedge L."/>
            <person name="Larimer F."/>
            <person name="Vergez L.M."/>
            <person name="Worsham P."/>
            <person name="Chu M.C."/>
            <person name="Andersen G.L."/>
        </authorList>
    </citation>
    <scope>NUCLEOTIDE SEQUENCE [LARGE SCALE GENOMIC DNA]</scope>
    <source>
        <strain>Antiqua</strain>
    </source>
</reference>
<comment type="function">
    <text evidence="1">This protein is one of the two subunits of integration host factor, a specific DNA-binding protein that functions in genetic recombination as well as in transcriptional and translational control.</text>
</comment>
<comment type="subunit">
    <text evidence="1">Heterodimer of an alpha and a beta chain.</text>
</comment>
<comment type="similarity">
    <text evidence="1">Belongs to the bacterial histone-like protein family.</text>
</comment>
<keyword id="KW-0233">DNA recombination</keyword>
<keyword id="KW-0238">DNA-binding</keyword>
<keyword id="KW-0804">Transcription</keyword>
<keyword id="KW-0805">Transcription regulation</keyword>
<keyword id="KW-0810">Translation regulation</keyword>
<evidence type="ECO:0000255" key="1">
    <source>
        <dbReference type="HAMAP-Rule" id="MF_00381"/>
    </source>
</evidence>
<feature type="chain" id="PRO_1000060679" description="Integration host factor subunit beta">
    <location>
        <begin position="1"/>
        <end position="94"/>
    </location>
</feature>
<accession>Q1CA70</accession>